<feature type="chain" id="PRO_0000277596" description="3'-5' exonuclease DinG">
    <location>
        <begin position="1"/>
        <end position="897"/>
    </location>
</feature>
<feature type="domain" description="Exonuclease" evidence="1">
    <location>
        <begin position="8"/>
        <end position="161"/>
    </location>
</feature>
<feature type="domain" description="Helicase ATP-binding" evidence="1">
    <location>
        <begin position="241"/>
        <end position="496"/>
    </location>
</feature>
<feature type="domain" description="Helicase C-terminal" evidence="1">
    <location>
        <begin position="703"/>
        <end position="893"/>
    </location>
</feature>
<feature type="short sequence motif" description="DEAH box" evidence="1">
    <location>
        <begin position="448"/>
        <end position="451"/>
    </location>
</feature>
<feature type="binding site" evidence="1">
    <location>
        <begin position="276"/>
        <end position="283"/>
    </location>
    <ligand>
        <name>ATP</name>
        <dbReference type="ChEBI" id="CHEBI:30616"/>
    </ligand>
</feature>
<dbReference type="EC" id="3.1.-.-" evidence="1"/>
<dbReference type="EMBL" id="BA000017">
    <property type="protein sequence ID" value="BAB57617.1"/>
    <property type="molecule type" value="Genomic_DNA"/>
</dbReference>
<dbReference type="RefSeq" id="WP_000525078.1">
    <property type="nucleotide sequence ID" value="NC_002758.2"/>
</dbReference>
<dbReference type="SMR" id="Q99U34"/>
<dbReference type="KEGG" id="sav:SAV1455"/>
<dbReference type="HOGENOM" id="CLU_012117_1_1_9"/>
<dbReference type="PhylomeDB" id="Q99U34"/>
<dbReference type="Proteomes" id="UP000002481">
    <property type="component" value="Chromosome"/>
</dbReference>
<dbReference type="GO" id="GO:0005829">
    <property type="term" value="C:cytosol"/>
    <property type="evidence" value="ECO:0007669"/>
    <property type="project" value="TreeGrafter"/>
</dbReference>
<dbReference type="GO" id="GO:0008408">
    <property type="term" value="F:3'-5' exonuclease activity"/>
    <property type="evidence" value="ECO:0007669"/>
    <property type="project" value="UniProtKB-UniRule"/>
</dbReference>
<dbReference type="GO" id="GO:0005524">
    <property type="term" value="F:ATP binding"/>
    <property type="evidence" value="ECO:0007669"/>
    <property type="project" value="UniProtKB-UniRule"/>
</dbReference>
<dbReference type="GO" id="GO:0003677">
    <property type="term" value="F:DNA binding"/>
    <property type="evidence" value="ECO:0007669"/>
    <property type="project" value="InterPro"/>
</dbReference>
<dbReference type="GO" id="GO:0003887">
    <property type="term" value="F:DNA-directed DNA polymerase activity"/>
    <property type="evidence" value="ECO:0007669"/>
    <property type="project" value="InterPro"/>
</dbReference>
<dbReference type="GO" id="GO:0004386">
    <property type="term" value="F:helicase activity"/>
    <property type="evidence" value="ECO:0007669"/>
    <property type="project" value="InterPro"/>
</dbReference>
<dbReference type="GO" id="GO:0016818">
    <property type="term" value="F:hydrolase activity, acting on acid anhydrides, in phosphorus-containing anhydrides"/>
    <property type="evidence" value="ECO:0007669"/>
    <property type="project" value="InterPro"/>
</dbReference>
<dbReference type="GO" id="GO:0045004">
    <property type="term" value="P:DNA replication proofreading"/>
    <property type="evidence" value="ECO:0007669"/>
    <property type="project" value="TreeGrafter"/>
</dbReference>
<dbReference type="CDD" id="cd06127">
    <property type="entry name" value="DEDDh"/>
    <property type="match status" value="1"/>
</dbReference>
<dbReference type="FunFam" id="3.30.420.10:FF:000045">
    <property type="entry name" value="3'-5' exonuclease DinG"/>
    <property type="match status" value="1"/>
</dbReference>
<dbReference type="FunFam" id="3.40.50.300:FF:001816">
    <property type="entry name" value="3'-5' exonuclease DinG"/>
    <property type="match status" value="1"/>
</dbReference>
<dbReference type="FunFam" id="3.40.50.300:FF:000437">
    <property type="entry name" value="ATP-dependent DNA helicase DinG"/>
    <property type="match status" value="1"/>
</dbReference>
<dbReference type="Gene3D" id="3.40.50.300">
    <property type="entry name" value="P-loop containing nucleotide triphosphate hydrolases"/>
    <property type="match status" value="2"/>
</dbReference>
<dbReference type="Gene3D" id="3.30.420.10">
    <property type="entry name" value="Ribonuclease H-like superfamily/Ribonuclease H"/>
    <property type="match status" value="1"/>
</dbReference>
<dbReference type="HAMAP" id="MF_02206">
    <property type="entry name" value="DinG_exonucl"/>
    <property type="match status" value="1"/>
</dbReference>
<dbReference type="InterPro" id="IPR006555">
    <property type="entry name" value="ATP-dep_Helicase_C"/>
</dbReference>
<dbReference type="InterPro" id="IPR006310">
    <property type="entry name" value="DinG"/>
</dbReference>
<dbReference type="InterPro" id="IPR006054">
    <property type="entry name" value="DnaQ"/>
</dbReference>
<dbReference type="InterPro" id="IPR013520">
    <property type="entry name" value="Exonuclease_RNaseT/DNA_pol3"/>
</dbReference>
<dbReference type="InterPro" id="IPR014013">
    <property type="entry name" value="Helic_SF1/SF2_ATP-bd_DinG/Rad3"/>
</dbReference>
<dbReference type="InterPro" id="IPR027417">
    <property type="entry name" value="P-loop_NTPase"/>
</dbReference>
<dbReference type="InterPro" id="IPR012337">
    <property type="entry name" value="RNaseH-like_sf"/>
</dbReference>
<dbReference type="InterPro" id="IPR036397">
    <property type="entry name" value="RNaseH_sf"/>
</dbReference>
<dbReference type="NCBIfam" id="TIGR01407">
    <property type="entry name" value="dinG_rel"/>
    <property type="match status" value="1"/>
</dbReference>
<dbReference type="NCBIfam" id="TIGR00573">
    <property type="entry name" value="dnaq"/>
    <property type="match status" value="1"/>
</dbReference>
<dbReference type="PANTHER" id="PTHR30231">
    <property type="entry name" value="DNA POLYMERASE III SUBUNIT EPSILON"/>
    <property type="match status" value="1"/>
</dbReference>
<dbReference type="PANTHER" id="PTHR30231:SF41">
    <property type="entry name" value="DNA POLYMERASE III SUBUNIT EPSILON"/>
    <property type="match status" value="1"/>
</dbReference>
<dbReference type="Pfam" id="PF13307">
    <property type="entry name" value="Helicase_C_2"/>
    <property type="match status" value="1"/>
</dbReference>
<dbReference type="Pfam" id="PF00929">
    <property type="entry name" value="RNase_T"/>
    <property type="match status" value="1"/>
</dbReference>
<dbReference type="SMART" id="SM00479">
    <property type="entry name" value="EXOIII"/>
    <property type="match status" value="1"/>
</dbReference>
<dbReference type="SMART" id="SM00491">
    <property type="entry name" value="HELICc2"/>
    <property type="match status" value="1"/>
</dbReference>
<dbReference type="SUPFAM" id="SSF52540">
    <property type="entry name" value="P-loop containing nucleoside triphosphate hydrolases"/>
    <property type="match status" value="1"/>
</dbReference>
<dbReference type="SUPFAM" id="SSF53098">
    <property type="entry name" value="Ribonuclease H-like"/>
    <property type="match status" value="1"/>
</dbReference>
<dbReference type="PROSITE" id="PS51193">
    <property type="entry name" value="HELICASE_ATP_BIND_2"/>
    <property type="match status" value="1"/>
</dbReference>
<dbReference type="PROSITE" id="PS51194">
    <property type="entry name" value="HELICASE_CTER"/>
    <property type="match status" value="1"/>
</dbReference>
<comment type="function">
    <text evidence="1">3'-5' exonuclease.</text>
</comment>
<comment type="similarity">
    <text evidence="1">Belongs to the helicase family. DinG subfamily. Type 2 sub-subfamily.</text>
</comment>
<keyword id="KW-0067">ATP-binding</keyword>
<keyword id="KW-0269">Exonuclease</keyword>
<keyword id="KW-0378">Hydrolase</keyword>
<keyword id="KW-0540">Nuclease</keyword>
<keyword id="KW-0547">Nucleotide-binding</keyword>
<gene>
    <name evidence="1" type="primary">dinG</name>
    <name type="ordered locus">SAV1455</name>
</gene>
<accession>Q99U34</accession>
<evidence type="ECO:0000255" key="1">
    <source>
        <dbReference type="HAMAP-Rule" id="MF_02206"/>
    </source>
</evidence>
<proteinExistence type="inferred from homology"/>
<protein>
    <recommendedName>
        <fullName evidence="1">3'-5' exonuclease DinG</fullName>
        <ecNumber evidence="1">3.1.-.-</ecNumber>
    </recommendedName>
</protein>
<name>DING_STAAM</name>
<reference key="1">
    <citation type="journal article" date="2001" name="Lancet">
        <title>Whole genome sequencing of meticillin-resistant Staphylococcus aureus.</title>
        <authorList>
            <person name="Kuroda M."/>
            <person name="Ohta T."/>
            <person name="Uchiyama I."/>
            <person name="Baba T."/>
            <person name="Yuzawa H."/>
            <person name="Kobayashi I."/>
            <person name="Cui L."/>
            <person name="Oguchi A."/>
            <person name="Aoki K."/>
            <person name="Nagai Y."/>
            <person name="Lian J.-Q."/>
            <person name="Ito T."/>
            <person name="Kanamori M."/>
            <person name="Matsumaru H."/>
            <person name="Maruyama A."/>
            <person name="Murakami H."/>
            <person name="Hosoyama A."/>
            <person name="Mizutani-Ui Y."/>
            <person name="Takahashi N.K."/>
            <person name="Sawano T."/>
            <person name="Inoue R."/>
            <person name="Kaito C."/>
            <person name="Sekimizu K."/>
            <person name="Hirakawa H."/>
            <person name="Kuhara S."/>
            <person name="Goto S."/>
            <person name="Yabuzaki J."/>
            <person name="Kanehisa M."/>
            <person name="Yamashita A."/>
            <person name="Oshima K."/>
            <person name="Furuya K."/>
            <person name="Yoshino C."/>
            <person name="Shiba T."/>
            <person name="Hattori M."/>
            <person name="Ogasawara N."/>
            <person name="Hayashi H."/>
            <person name="Hiramatsu K."/>
        </authorList>
    </citation>
    <scope>NUCLEOTIDE SEQUENCE [LARGE SCALE GENOMIC DNA]</scope>
    <source>
        <strain>Mu50 / ATCC 700699</strain>
    </source>
</reference>
<sequence length="897" mass="104218">MGMATYAVVDLETTGNQLDFDDIIQIGITFVRNNQIIDTYHSMIRTNLEIPPFIQALTSIEENMLQQAPYFNQVAQEIYDKIKDCIFVAHNVDFDLNFIKKAFKDCNIQYRPKKVIDTLEIFKIAFPTDKSYQLSELAEAHGITLANAHRADEDAATTAKLMILAFEKFEKLPLDTLKQLYYLSKQLKYDLYDIFFEMVRQYDAKPLDKSYEKFEQIIYRKQVDFKKPTTNYNGSLKSLYSKAVDQLGLTYRPQQLYLAETILDQLMHSEKAMIEASLGSGKSLAYLLAALMYNIETGKHVMISTNTKLLQSQLLEKDIPAMNEALNFKINALLIKSKSDYISLGLISQILKDDTSNYEVNILKMQLLIWITETPSGDIQELNLKGGQKMYFDQKIETYVPARHDVHYYNFIKRNAQNIQIGITNHAHLIHSDVENSIYQLFDDCIVDEAHRLPDYALNQVTNELSYADIKYQLGLIGKNENEKLLKAIDQLEKQRILEKLDIAPIDIFGLKASMNEIHELNEQLFSTIFTIINDSDVYDDDIHRFHNVFTFETKDILKDLHAIIDKLNKTLEIFNGISHKTVKSLRKQLLYLKDKFKNIEQSLKAGHTSFISIKNLSQKSTIRLYVKDYAVKDVLTKQVLEKFKSLIFISGTLKFNHSFEAFKQLFNKDVHFNTFEVNTSLQSAKNTSVFIPSDVASYQYKNIDEYVASIVSYIIEYTTITSSKCLVLFTSYKMMHMVQDMLNELPEFEDYVVLTQQQNQNYKIVQQFNNFDKAILLGTSTFFEGFDFQANGIKCVMIAKLPFMNKHNAKYWLMDSEFTSTFKEYVLPDAVTRFRQGLGRLIRNENDRGIIVSFDDRLINSNYKNFFEQTLENYRQKKGDIQQFGKLLRQIQKKKK</sequence>
<organism>
    <name type="scientific">Staphylococcus aureus (strain Mu50 / ATCC 700699)</name>
    <dbReference type="NCBI Taxonomy" id="158878"/>
    <lineage>
        <taxon>Bacteria</taxon>
        <taxon>Bacillati</taxon>
        <taxon>Bacillota</taxon>
        <taxon>Bacilli</taxon>
        <taxon>Bacillales</taxon>
        <taxon>Staphylococcaceae</taxon>
        <taxon>Staphylococcus</taxon>
    </lineage>
</organism>